<comment type="function">
    <text evidence="1">Binds directly to 16S ribosomal RNA.</text>
</comment>
<comment type="similarity">
    <text evidence="1">Belongs to the bacterial ribosomal protein bS20 family.</text>
</comment>
<sequence length="90" mass="10117">MANSKQAKKRIIQAERNRQHNVARRSMMRTFLKKTAYAIEKGDVEAAKENFAKVVPILDKYASKGLIHKNKAARHKSRLSAKIKALATAA</sequence>
<gene>
    <name evidence="1" type="primary">rpsT</name>
    <name type="ordered locus">FTM_0041</name>
</gene>
<feature type="chain" id="PRO_1000126450" description="Small ribosomal subunit protein bS20">
    <location>
        <begin position="1"/>
        <end position="90"/>
    </location>
</feature>
<proteinExistence type="inferred from homology"/>
<keyword id="KW-0687">Ribonucleoprotein</keyword>
<keyword id="KW-0689">Ribosomal protein</keyword>
<keyword id="KW-0694">RNA-binding</keyword>
<keyword id="KW-0699">rRNA-binding</keyword>
<dbReference type="EMBL" id="CP000915">
    <property type="protein sequence ID" value="ACD30154.1"/>
    <property type="molecule type" value="Genomic_DNA"/>
</dbReference>
<dbReference type="SMR" id="B2SEJ5"/>
<dbReference type="KEGG" id="ftm:FTM_0041"/>
<dbReference type="HOGENOM" id="CLU_160655_4_0_6"/>
<dbReference type="GO" id="GO:0005829">
    <property type="term" value="C:cytosol"/>
    <property type="evidence" value="ECO:0007669"/>
    <property type="project" value="TreeGrafter"/>
</dbReference>
<dbReference type="GO" id="GO:0015935">
    <property type="term" value="C:small ribosomal subunit"/>
    <property type="evidence" value="ECO:0007669"/>
    <property type="project" value="TreeGrafter"/>
</dbReference>
<dbReference type="GO" id="GO:0070181">
    <property type="term" value="F:small ribosomal subunit rRNA binding"/>
    <property type="evidence" value="ECO:0007669"/>
    <property type="project" value="TreeGrafter"/>
</dbReference>
<dbReference type="GO" id="GO:0003735">
    <property type="term" value="F:structural constituent of ribosome"/>
    <property type="evidence" value="ECO:0007669"/>
    <property type="project" value="InterPro"/>
</dbReference>
<dbReference type="GO" id="GO:0006412">
    <property type="term" value="P:translation"/>
    <property type="evidence" value="ECO:0007669"/>
    <property type="project" value="UniProtKB-UniRule"/>
</dbReference>
<dbReference type="FunFam" id="1.20.58.110:FF:000001">
    <property type="entry name" value="30S ribosomal protein S20"/>
    <property type="match status" value="1"/>
</dbReference>
<dbReference type="Gene3D" id="1.20.58.110">
    <property type="entry name" value="Ribosomal protein S20"/>
    <property type="match status" value="1"/>
</dbReference>
<dbReference type="HAMAP" id="MF_00500">
    <property type="entry name" value="Ribosomal_bS20"/>
    <property type="match status" value="1"/>
</dbReference>
<dbReference type="InterPro" id="IPR002583">
    <property type="entry name" value="Ribosomal_bS20"/>
</dbReference>
<dbReference type="InterPro" id="IPR036510">
    <property type="entry name" value="Ribosomal_bS20_sf"/>
</dbReference>
<dbReference type="NCBIfam" id="TIGR00029">
    <property type="entry name" value="S20"/>
    <property type="match status" value="1"/>
</dbReference>
<dbReference type="PANTHER" id="PTHR33398">
    <property type="entry name" value="30S RIBOSOMAL PROTEIN S20"/>
    <property type="match status" value="1"/>
</dbReference>
<dbReference type="PANTHER" id="PTHR33398:SF1">
    <property type="entry name" value="SMALL RIBOSOMAL SUBUNIT PROTEIN BS20C"/>
    <property type="match status" value="1"/>
</dbReference>
<dbReference type="Pfam" id="PF01649">
    <property type="entry name" value="Ribosomal_S20p"/>
    <property type="match status" value="1"/>
</dbReference>
<dbReference type="SUPFAM" id="SSF46992">
    <property type="entry name" value="Ribosomal protein S20"/>
    <property type="match status" value="1"/>
</dbReference>
<protein>
    <recommendedName>
        <fullName evidence="1">Small ribosomal subunit protein bS20</fullName>
    </recommendedName>
    <alternativeName>
        <fullName evidence="2">30S ribosomal protein S20</fullName>
    </alternativeName>
</protein>
<accession>B2SEJ5</accession>
<evidence type="ECO:0000255" key="1">
    <source>
        <dbReference type="HAMAP-Rule" id="MF_00500"/>
    </source>
</evidence>
<evidence type="ECO:0000305" key="2"/>
<reference key="1">
    <citation type="journal article" date="2009" name="PLoS Pathog.">
        <title>Molecular evolutionary consequences of niche restriction in Francisella tularensis, a facultative intracellular pathogen.</title>
        <authorList>
            <person name="Larsson P."/>
            <person name="Elfsmark D."/>
            <person name="Svensson K."/>
            <person name="Wikstroem P."/>
            <person name="Forsman M."/>
            <person name="Brettin T."/>
            <person name="Keim P."/>
            <person name="Johansson A."/>
        </authorList>
    </citation>
    <scope>NUCLEOTIDE SEQUENCE [LARGE SCALE GENOMIC DNA]</scope>
    <source>
        <strain>FSC147</strain>
    </source>
</reference>
<name>RS20_FRATM</name>
<organism>
    <name type="scientific">Francisella tularensis subsp. mediasiatica (strain FSC147)</name>
    <dbReference type="NCBI Taxonomy" id="441952"/>
    <lineage>
        <taxon>Bacteria</taxon>
        <taxon>Pseudomonadati</taxon>
        <taxon>Pseudomonadota</taxon>
        <taxon>Gammaproteobacteria</taxon>
        <taxon>Thiotrichales</taxon>
        <taxon>Francisellaceae</taxon>
        <taxon>Francisella</taxon>
    </lineage>
</organism>